<name>HPCC_ECOLX</name>
<comment type="function">
    <text evidence="3">Catalyzes the conversion of 5-carboxymethyl-2-hydroxy-muconic semialdehyde (CHMS) into 5-carboxymethyl-2-hydroxy-muconic acid (CHM or (2E,4Z)-5-hydroxypenta-2,4-diene-1,2,5-tricarboxylate). Is involved in a meta-cleavage pathway for the catabolism of 4-hydroxyphenylacetate (4-HPA) via homoprotocatechuate (HPC or 3,4-dihydroxyphenylacetate).</text>
</comment>
<comment type="catalytic activity">
    <reaction evidence="3">
        <text>2-hydroxy-5-carboxymethylmuconate semialdehyde + NAD(+) + H2O = (2E,4Z)-5-hydroxypenta-2,4-diene-1,2,5-tricarboxylate + NADH + 2 H(+)</text>
        <dbReference type="Rhea" id="RHEA:15681"/>
        <dbReference type="ChEBI" id="CHEBI:15377"/>
        <dbReference type="ChEBI" id="CHEBI:15378"/>
        <dbReference type="ChEBI" id="CHEBI:47961"/>
        <dbReference type="ChEBI" id="CHEBI:57540"/>
        <dbReference type="ChEBI" id="CHEBI:57945"/>
        <dbReference type="ChEBI" id="CHEBI:58030"/>
        <dbReference type="EC" id="1.2.1.60"/>
    </reaction>
    <physiologicalReaction direction="left-to-right" evidence="7">
        <dbReference type="Rhea" id="RHEA:15682"/>
    </physiologicalReaction>
</comment>
<comment type="biophysicochemical properties">
    <kinetics>
        <KM evidence="3">19.5 uM for NAD(+)</KM>
        <KM evidence="3">9.2 uM for 2-hydroxy-5-carboxymethylmuconate semialdehyde</KM>
    </kinetics>
    <phDependence>
        <text evidence="3">Optimum pH is 7.5.</text>
    </phDependence>
</comment>
<comment type="pathway">
    <text evidence="7 8">Aromatic compound metabolism; 4-hydroxyphenylacetate degradation; pyruvate and succinate semialdehyde from 4-hydroxyphenylacetate: step 3/7.</text>
</comment>
<comment type="subunit">
    <text evidence="3">Homodimer.</text>
</comment>
<comment type="similarity">
    <text evidence="6">Belongs to the aldehyde dehydrogenase family.</text>
</comment>
<feature type="chain" id="PRO_0000056580" description="5-carboxymethyl-2-hydroxymuconate semialdehyde dehydrogenase">
    <location>
        <begin position="1"/>
        <end position="468"/>
    </location>
</feature>
<feature type="active site" evidence="1">
    <location>
        <position position="244"/>
    </location>
</feature>
<feature type="active site" description="Nucleophile" evidence="2">
    <location>
        <position position="278"/>
    </location>
</feature>
<feature type="sequence conflict" description="In Ref. 2; AA sequence." evidence="6" ref="2">
    <original>L</original>
    <variation>Q</variation>
    <location>
        <position position="20"/>
    </location>
</feature>
<reference key="1">
    <citation type="journal article" date="1995" name="Gene">
        <title>Sequence of the hpcC and hpcG genes of the meta-fission homoprotocatechuic acid pathway of Escherichia coli C: nearly 40% amino-acid identity with the analogous enzymes of the catechol pathway.</title>
        <authorList>
            <person name="Roper D.I."/>
            <person name="Stringfellow J.M."/>
            <person name="Cooper R.A."/>
        </authorList>
    </citation>
    <scope>NUCLEOTIDE SEQUENCE [GENOMIC DNA]</scope>
    <scope>PATHWAY</scope>
    <source>
        <strain>C</strain>
    </source>
</reference>
<reference key="2">
    <citation type="journal article" date="1989" name="FEMS Microbiol. Lett.">
        <title>5-Carboxymethyl-2-hydroxymuconic semialdehyde dehydrogenases of Escherichia coli C and Klebsiella pneumoniae M5a1 show very high N-terminal sequence homology.</title>
        <authorList>
            <person name="Fawcett T."/>
            <person name="Garrido-Pertierra A."/>
            <person name="Cooper R.A."/>
        </authorList>
    </citation>
    <scope>PROTEIN SEQUENCE OF 1-34</scope>
    <scope>FUNCTION</scope>
    <scope>CATALYTIC ACTIVITY</scope>
    <scope>BIOPHYSICOCHEMICAL PROPERTIES</scope>
    <scope>SUBUNIT</scope>
    <scope>PATHWAY</scope>
    <source>
        <strain>C</strain>
    </source>
</reference>
<protein>
    <recommendedName>
        <fullName evidence="4 5">5-carboxymethyl-2-hydroxymuconate semialdehyde dehydrogenase</fullName>
        <shortName evidence="4 5">CHMS dehydrogenase</shortName>
        <ecNumber evidence="3">1.2.1.60</ecNumber>
    </recommendedName>
</protein>
<accession>P42269</accession>
<gene>
    <name evidence="5" type="primary">hpcC</name>
</gene>
<sequence>MKKVNHWINGKNVAGNDYFLTTNPATGEVLADVASGGEAEINQAVATAKEAFPKWANLPMKERARLMRRLGDLIDQNVPEIAAMETADTGLPIHQTKNVLIPRASHNFEFFAEVCQQMNGKTYPVDDKMLNYTLVQPVGVCALVSPWNVPFMTATWKVAPCLALGITAVLKMSELSPLTADRLGELALEAGIPAGVLNVVQGYGATAGDALVRHHDVRAVSFTGGTATGRNIMKNAGLKKYSMELGGKSPVLIFEDADIERALDAALFTIFSINGERCTAGSRIFIQQSIYPEFVKFAERANRVRVGDPTDPNTQVGALISQQHWEKVSGYIRLGIEEGATLLAGGPDKPSDLPAHLKGGNFLRPTVLADVDNRMRVAQEEIFGPVACLLPFKDEAEALRLANDVEYGLASYIWTQDVSKVLRLARGIEAGMVFVNTQFVRDLRHAFGGVKPRTGREGGGYSSKCSRK</sequence>
<evidence type="ECO:0000255" key="1">
    <source>
        <dbReference type="PROSITE-ProRule" id="PRU10007"/>
    </source>
</evidence>
<evidence type="ECO:0000255" key="2">
    <source>
        <dbReference type="PROSITE-ProRule" id="PRU10008"/>
    </source>
</evidence>
<evidence type="ECO:0000269" key="3">
    <source>
    </source>
</evidence>
<evidence type="ECO:0000303" key="4">
    <source>
    </source>
</evidence>
<evidence type="ECO:0000303" key="5">
    <source>
    </source>
</evidence>
<evidence type="ECO:0000305" key="6"/>
<evidence type="ECO:0000305" key="7">
    <source>
    </source>
</evidence>
<evidence type="ECO:0000305" key="8">
    <source>
    </source>
</evidence>
<dbReference type="EC" id="1.2.1.60" evidence="3"/>
<dbReference type="EMBL" id="X81322">
    <property type="protein sequence ID" value="CAA57102.1"/>
    <property type="molecule type" value="Genomic_DNA"/>
</dbReference>
<dbReference type="PIR" id="I41082">
    <property type="entry name" value="I41082"/>
</dbReference>
<dbReference type="SMR" id="P42269"/>
<dbReference type="STRING" id="585034.ECIAI1_4574"/>
<dbReference type="eggNOG" id="COG1012">
    <property type="taxonomic scope" value="Bacteria"/>
</dbReference>
<dbReference type="SABIO-RK" id="P42269"/>
<dbReference type="UniPathway" id="UPA00208">
    <property type="reaction ID" value="UER00418"/>
</dbReference>
<dbReference type="GO" id="GO:0018480">
    <property type="term" value="F:5-carboxymethyl-2-hydroxymuconic-semialdehyde dehydrogenase activity"/>
    <property type="evidence" value="ECO:0007669"/>
    <property type="project" value="InterPro"/>
</dbReference>
<dbReference type="GO" id="GO:1901023">
    <property type="term" value="P:4-hydroxyphenylacetate catabolic process"/>
    <property type="evidence" value="ECO:0007669"/>
    <property type="project" value="InterPro"/>
</dbReference>
<dbReference type="CDD" id="cd07093">
    <property type="entry name" value="ALDH_F8_HMSADH"/>
    <property type="match status" value="1"/>
</dbReference>
<dbReference type="FunFam" id="3.40.605.10:FF:000001">
    <property type="entry name" value="Aldehyde dehydrogenase 1"/>
    <property type="match status" value="1"/>
</dbReference>
<dbReference type="FunFam" id="3.40.309.10:FF:000012">
    <property type="entry name" value="Betaine aldehyde dehydrogenase"/>
    <property type="match status" value="1"/>
</dbReference>
<dbReference type="Gene3D" id="3.40.605.10">
    <property type="entry name" value="Aldehyde Dehydrogenase, Chain A, domain 1"/>
    <property type="match status" value="1"/>
</dbReference>
<dbReference type="Gene3D" id="3.40.309.10">
    <property type="entry name" value="Aldehyde Dehydrogenase, Chain A, domain 2"/>
    <property type="match status" value="1"/>
</dbReference>
<dbReference type="InterPro" id="IPR016161">
    <property type="entry name" value="Ald_DH/histidinol_DH"/>
</dbReference>
<dbReference type="InterPro" id="IPR016163">
    <property type="entry name" value="Ald_DH_C"/>
</dbReference>
<dbReference type="InterPro" id="IPR016160">
    <property type="entry name" value="Ald_DH_CS_CYS"/>
</dbReference>
<dbReference type="InterPro" id="IPR029510">
    <property type="entry name" value="Ald_DH_CS_GLU"/>
</dbReference>
<dbReference type="InterPro" id="IPR016162">
    <property type="entry name" value="Ald_DH_N"/>
</dbReference>
<dbReference type="InterPro" id="IPR015590">
    <property type="entry name" value="Aldehyde_DH_dom"/>
</dbReference>
<dbReference type="InterPro" id="IPR011985">
    <property type="entry name" value="DH_HpaE"/>
</dbReference>
<dbReference type="NCBIfam" id="TIGR02299">
    <property type="entry name" value="HpaE"/>
    <property type="match status" value="1"/>
</dbReference>
<dbReference type="PANTHER" id="PTHR43720">
    <property type="entry name" value="2-AMINOMUCONIC SEMIALDEHYDE DEHYDROGENASE"/>
    <property type="match status" value="1"/>
</dbReference>
<dbReference type="PANTHER" id="PTHR43720:SF2">
    <property type="entry name" value="2-AMINOMUCONIC SEMIALDEHYDE DEHYDROGENASE"/>
    <property type="match status" value="1"/>
</dbReference>
<dbReference type="Pfam" id="PF00171">
    <property type="entry name" value="Aldedh"/>
    <property type="match status" value="1"/>
</dbReference>
<dbReference type="SUPFAM" id="SSF53720">
    <property type="entry name" value="ALDH-like"/>
    <property type="match status" value="1"/>
</dbReference>
<dbReference type="PROSITE" id="PS00070">
    <property type="entry name" value="ALDEHYDE_DEHYDR_CYS"/>
    <property type="match status" value="1"/>
</dbReference>
<dbReference type="PROSITE" id="PS00687">
    <property type="entry name" value="ALDEHYDE_DEHYDR_GLU"/>
    <property type="match status" value="1"/>
</dbReference>
<keyword id="KW-0058">Aromatic hydrocarbons catabolism</keyword>
<keyword id="KW-0903">Direct protein sequencing</keyword>
<keyword id="KW-0520">NAD</keyword>
<keyword id="KW-0560">Oxidoreductase</keyword>
<proteinExistence type="evidence at protein level"/>
<organism>
    <name type="scientific">Escherichia coli</name>
    <dbReference type="NCBI Taxonomy" id="562"/>
    <lineage>
        <taxon>Bacteria</taxon>
        <taxon>Pseudomonadati</taxon>
        <taxon>Pseudomonadota</taxon>
        <taxon>Gammaproteobacteria</taxon>
        <taxon>Enterobacterales</taxon>
        <taxon>Enterobacteriaceae</taxon>
        <taxon>Escherichia</taxon>
    </lineage>
</organism>